<protein>
    <recommendedName>
        <fullName evidence="1">TLR adapter interacting with SLC15A4 on the lysosome</fullName>
    </recommendedName>
</protein>
<accession>Q32LD7</accession>
<comment type="function">
    <text evidence="1">Innate immune adapter that mediates the recruitment and activation of IRF5 downstream of endolysosomal toll-like receptors TLR7, TLR8 and TLR9. Following recruitment to endolysosome by SLC15A4 downstream of TLR7, TLR8 and TLR9, specifically recruits IRF5 transcription factor via its pLxIS motif, leading to IRF5 activation and subsequent expression of type I interferons. Plays a role in the regulation of endolysosomal pH in immune cells such as B-cells, dendritic cells and monocytes.</text>
</comment>
<comment type="subunit">
    <text evidence="1">Interacts (via pLxIS motif) with IRF5; leading to IRF5 activation. Interacts with SLC15A4; leading to its recruitment to endolysosome.</text>
</comment>
<comment type="subcellular location">
    <subcellularLocation>
        <location evidence="1">Lysosome membrane</location>
    </subcellularLocation>
    <subcellularLocation>
        <location evidence="1">Endosome membrane</location>
    </subcellularLocation>
    <subcellularLocation>
        <location evidence="1">Nucleus</location>
    </subcellularLocation>
    <subcellularLocation>
        <location evidence="1">Cytoplasm</location>
    </subcellularLocation>
    <text evidence="1">Recruited to endolysosome following interaction with SLC15A4. May colocalize with TLR7 in the endosomal pathway.</text>
</comment>
<comment type="domain">
    <text evidence="1">The pLxIS motif constitutes an IRF5-binding motif: following phosphorylation, the phosphorylated pLxIS motif of TASL recruits IRF5.</text>
</comment>
<comment type="PTM">
    <text evidence="1">The phosphorylated pLxIS motif constitutes an IRF5-binding motif, leading to recruitment of the transcription factor IRF5 to induce type-I interferons and other cytokines.</text>
</comment>
<feature type="chain" id="PRO_0000251251" description="TLR adapter interacting with SLC15A4 on the lysosome">
    <location>
        <begin position="1"/>
        <end position="300"/>
    </location>
</feature>
<feature type="short sequence motif" description="pLxIS motif" evidence="1">
    <location>
        <begin position="289"/>
        <end position="293"/>
    </location>
</feature>
<feature type="modified residue" description="Phosphoserine" evidence="1">
    <location>
        <position position="293"/>
    </location>
</feature>
<keyword id="KW-0963">Cytoplasm</keyword>
<keyword id="KW-0967">Endosome</keyword>
<keyword id="KW-0391">Immunity</keyword>
<keyword id="KW-0399">Innate immunity</keyword>
<keyword id="KW-0458">Lysosome</keyword>
<keyword id="KW-0472">Membrane</keyword>
<keyword id="KW-0539">Nucleus</keyword>
<keyword id="KW-0597">Phosphoprotein</keyword>
<keyword id="KW-1185">Reference proteome</keyword>
<organism>
    <name type="scientific">Bos taurus</name>
    <name type="common">Bovine</name>
    <dbReference type="NCBI Taxonomy" id="9913"/>
    <lineage>
        <taxon>Eukaryota</taxon>
        <taxon>Metazoa</taxon>
        <taxon>Chordata</taxon>
        <taxon>Craniata</taxon>
        <taxon>Vertebrata</taxon>
        <taxon>Euteleostomi</taxon>
        <taxon>Mammalia</taxon>
        <taxon>Eutheria</taxon>
        <taxon>Laurasiatheria</taxon>
        <taxon>Artiodactyla</taxon>
        <taxon>Ruminantia</taxon>
        <taxon>Pecora</taxon>
        <taxon>Bovidae</taxon>
        <taxon>Bovinae</taxon>
        <taxon>Bos</taxon>
    </lineage>
</organism>
<evidence type="ECO:0000250" key="1">
    <source>
        <dbReference type="UniProtKB" id="Q9HAI6"/>
    </source>
</evidence>
<dbReference type="EMBL" id="BC109631">
    <property type="protein sequence ID" value="AAI09632.1"/>
    <property type="molecule type" value="mRNA"/>
</dbReference>
<dbReference type="RefSeq" id="NP_001033626.1">
    <property type="nucleotide sequence ID" value="NM_001038537.2"/>
</dbReference>
<dbReference type="FunCoup" id="Q32LD7">
    <property type="interactions" value="386"/>
</dbReference>
<dbReference type="STRING" id="9913.ENSBTAP00000011345"/>
<dbReference type="PaxDb" id="9913-ENSBTAP00000011345"/>
<dbReference type="GeneID" id="513911"/>
<dbReference type="KEGG" id="bta:513911"/>
<dbReference type="CTD" id="80231"/>
<dbReference type="eggNOG" id="ENOG502QTA8">
    <property type="taxonomic scope" value="Eukaryota"/>
</dbReference>
<dbReference type="InParanoid" id="Q32LD7"/>
<dbReference type="OrthoDB" id="9892060at2759"/>
<dbReference type="Proteomes" id="UP000009136">
    <property type="component" value="Unplaced"/>
</dbReference>
<dbReference type="GO" id="GO:0036020">
    <property type="term" value="C:endolysosome membrane"/>
    <property type="evidence" value="ECO:0000250"/>
    <property type="project" value="UniProtKB"/>
</dbReference>
<dbReference type="GO" id="GO:0005634">
    <property type="term" value="C:nucleus"/>
    <property type="evidence" value="ECO:0007669"/>
    <property type="project" value="UniProtKB-SubCell"/>
</dbReference>
<dbReference type="GO" id="GO:0045087">
    <property type="term" value="P:innate immune response"/>
    <property type="evidence" value="ECO:0007669"/>
    <property type="project" value="UniProtKB-KW"/>
</dbReference>
<dbReference type="GO" id="GO:0045089">
    <property type="term" value="P:positive regulation of innate immune response"/>
    <property type="evidence" value="ECO:0000250"/>
    <property type="project" value="UniProtKB"/>
</dbReference>
<dbReference type="GO" id="GO:0034157">
    <property type="term" value="P:positive regulation of toll-like receptor 7 signaling pathway"/>
    <property type="evidence" value="ECO:0000250"/>
    <property type="project" value="UniProtKB"/>
</dbReference>
<dbReference type="GO" id="GO:0034161">
    <property type="term" value="P:positive regulation of toll-like receptor 8 signaling pathway"/>
    <property type="evidence" value="ECO:0000250"/>
    <property type="project" value="UniProtKB"/>
</dbReference>
<dbReference type="GO" id="GO:0035751">
    <property type="term" value="P:regulation of lysosomal lumen pH"/>
    <property type="evidence" value="ECO:0000250"/>
    <property type="project" value="UniProtKB"/>
</dbReference>
<dbReference type="GO" id="GO:0034121">
    <property type="term" value="P:regulation of toll-like receptor signaling pathway"/>
    <property type="evidence" value="ECO:0007669"/>
    <property type="project" value="InterPro"/>
</dbReference>
<dbReference type="InterPro" id="IPR027869">
    <property type="entry name" value="TASL"/>
</dbReference>
<dbReference type="PANTHER" id="PTHR14889">
    <property type="entry name" value="RCG36411"/>
    <property type="match status" value="1"/>
</dbReference>
<dbReference type="PANTHER" id="PTHR14889:SF3">
    <property type="entry name" value="TLR ADAPTER INTERACTING WITH SLC15A4 ON THE LYSOSOME"/>
    <property type="match status" value="1"/>
</dbReference>
<dbReference type="Pfam" id="PF15133">
    <property type="entry name" value="TASL"/>
    <property type="match status" value="1"/>
</dbReference>
<reference key="1">
    <citation type="submission" date="2005-11" db="EMBL/GenBank/DDBJ databases">
        <authorList>
            <consortium name="NIH - Mammalian Gene Collection (MGC) project"/>
        </authorList>
    </citation>
    <scope>NUCLEOTIDE SEQUENCE [LARGE SCALE MRNA]</scope>
    <source>
        <strain>Crossbred X Angus</strain>
        <tissue>Liver</tissue>
    </source>
</reference>
<gene>
    <name evidence="1" type="primary">TASL</name>
</gene>
<sequence length="300" mass="33758">MLSEGYLSGLAYRNDIQWSYPSSNEQVAEEKEEEMEATAAASLSYSSVDETQVQNLYVSCKSSGKVISSVYSRESQHSRNPRITVLQTNPNPVYESPNLAAVELYRDTSRETYLVPPSCKSICKNYNDLQIAGGQVMAINSATTDFPSEGSFQYGPLLKSSEIPLSMEDSMFTQPSDLPPTPIQRYSSYWRITSIKEKNSLQMQKPISNAVLNEYLEQKLVELYKQYFMDTGFHDSSPTQILASELIMTNVDQISIQVSIEKNLEISKARDIVINRLLQYGSTEISTQSLHISQYSNVNP</sequence>
<name>TASL_BOVIN</name>
<proteinExistence type="evidence at transcript level"/>